<dbReference type="EC" id="3.5.2.3" evidence="1"/>
<dbReference type="EMBL" id="CP001638">
    <property type="protein sequence ID" value="ACS23905.1"/>
    <property type="molecule type" value="Genomic_DNA"/>
</dbReference>
<dbReference type="SMR" id="C5D8P8"/>
<dbReference type="STRING" id="471223.GWCH70_1045"/>
<dbReference type="KEGG" id="gwc:GWCH70_1045"/>
<dbReference type="eggNOG" id="COG0044">
    <property type="taxonomic scope" value="Bacteria"/>
</dbReference>
<dbReference type="HOGENOM" id="CLU_015572_1_0_9"/>
<dbReference type="OrthoDB" id="9765462at2"/>
<dbReference type="UniPathway" id="UPA00070">
    <property type="reaction ID" value="UER00117"/>
</dbReference>
<dbReference type="GO" id="GO:0005737">
    <property type="term" value="C:cytoplasm"/>
    <property type="evidence" value="ECO:0007669"/>
    <property type="project" value="TreeGrafter"/>
</dbReference>
<dbReference type="GO" id="GO:0004038">
    <property type="term" value="F:allantoinase activity"/>
    <property type="evidence" value="ECO:0007669"/>
    <property type="project" value="TreeGrafter"/>
</dbReference>
<dbReference type="GO" id="GO:0004151">
    <property type="term" value="F:dihydroorotase activity"/>
    <property type="evidence" value="ECO:0007669"/>
    <property type="project" value="UniProtKB-UniRule"/>
</dbReference>
<dbReference type="GO" id="GO:0008270">
    <property type="term" value="F:zinc ion binding"/>
    <property type="evidence" value="ECO:0007669"/>
    <property type="project" value="UniProtKB-UniRule"/>
</dbReference>
<dbReference type="GO" id="GO:0044205">
    <property type="term" value="P:'de novo' UMP biosynthetic process"/>
    <property type="evidence" value="ECO:0007669"/>
    <property type="project" value="UniProtKB-UniRule"/>
</dbReference>
<dbReference type="GO" id="GO:0006145">
    <property type="term" value="P:purine nucleobase catabolic process"/>
    <property type="evidence" value="ECO:0007669"/>
    <property type="project" value="TreeGrafter"/>
</dbReference>
<dbReference type="CDD" id="cd01317">
    <property type="entry name" value="DHOase_IIa"/>
    <property type="match status" value="1"/>
</dbReference>
<dbReference type="Gene3D" id="3.20.20.140">
    <property type="entry name" value="Metal-dependent hydrolases"/>
    <property type="match status" value="1"/>
</dbReference>
<dbReference type="Gene3D" id="2.30.40.10">
    <property type="entry name" value="Urease, subunit C, domain 1"/>
    <property type="match status" value="1"/>
</dbReference>
<dbReference type="HAMAP" id="MF_00220_B">
    <property type="entry name" value="PyrC_classI_B"/>
    <property type="match status" value="1"/>
</dbReference>
<dbReference type="InterPro" id="IPR006680">
    <property type="entry name" value="Amidohydro-rel"/>
</dbReference>
<dbReference type="InterPro" id="IPR004722">
    <property type="entry name" value="DHOase"/>
</dbReference>
<dbReference type="InterPro" id="IPR050138">
    <property type="entry name" value="DHOase/Allantoinase_Hydrolase"/>
</dbReference>
<dbReference type="InterPro" id="IPR002195">
    <property type="entry name" value="Dihydroorotase_CS"/>
</dbReference>
<dbReference type="InterPro" id="IPR011059">
    <property type="entry name" value="Metal-dep_hydrolase_composite"/>
</dbReference>
<dbReference type="InterPro" id="IPR032466">
    <property type="entry name" value="Metal_Hydrolase"/>
</dbReference>
<dbReference type="NCBIfam" id="NF006837">
    <property type="entry name" value="PRK09357.1-2"/>
    <property type="match status" value="1"/>
</dbReference>
<dbReference type="NCBIfam" id="TIGR00857">
    <property type="entry name" value="pyrC_multi"/>
    <property type="match status" value="1"/>
</dbReference>
<dbReference type="PANTHER" id="PTHR43668">
    <property type="entry name" value="ALLANTOINASE"/>
    <property type="match status" value="1"/>
</dbReference>
<dbReference type="PANTHER" id="PTHR43668:SF2">
    <property type="entry name" value="ALLANTOINASE"/>
    <property type="match status" value="1"/>
</dbReference>
<dbReference type="Pfam" id="PF01979">
    <property type="entry name" value="Amidohydro_1"/>
    <property type="match status" value="1"/>
</dbReference>
<dbReference type="SUPFAM" id="SSF51338">
    <property type="entry name" value="Composite domain of metallo-dependent hydrolases"/>
    <property type="match status" value="1"/>
</dbReference>
<dbReference type="SUPFAM" id="SSF51556">
    <property type="entry name" value="Metallo-dependent hydrolases"/>
    <property type="match status" value="1"/>
</dbReference>
<dbReference type="PROSITE" id="PS00482">
    <property type="entry name" value="DIHYDROOROTASE_1"/>
    <property type="match status" value="1"/>
</dbReference>
<dbReference type="PROSITE" id="PS00483">
    <property type="entry name" value="DIHYDROOROTASE_2"/>
    <property type="match status" value="1"/>
</dbReference>
<gene>
    <name evidence="1" type="primary">pyrC</name>
    <name type="ordered locus">GWCH70_1045</name>
</gene>
<comment type="function">
    <text evidence="1">Catalyzes the reversible cyclization of carbamoyl aspartate to dihydroorotate.</text>
</comment>
<comment type="catalytic activity">
    <reaction evidence="1">
        <text>(S)-dihydroorotate + H2O = N-carbamoyl-L-aspartate + H(+)</text>
        <dbReference type="Rhea" id="RHEA:24296"/>
        <dbReference type="ChEBI" id="CHEBI:15377"/>
        <dbReference type="ChEBI" id="CHEBI:15378"/>
        <dbReference type="ChEBI" id="CHEBI:30864"/>
        <dbReference type="ChEBI" id="CHEBI:32814"/>
        <dbReference type="EC" id="3.5.2.3"/>
    </reaction>
</comment>
<comment type="cofactor">
    <cofactor evidence="1">
        <name>Zn(2+)</name>
        <dbReference type="ChEBI" id="CHEBI:29105"/>
    </cofactor>
    <text evidence="1">Binds 2 Zn(2+) ions per subunit.</text>
</comment>
<comment type="pathway">
    <text evidence="1">Pyrimidine metabolism; UMP biosynthesis via de novo pathway; (S)-dihydroorotate from bicarbonate: step 3/3.</text>
</comment>
<comment type="similarity">
    <text evidence="1">Belongs to the metallo-dependent hydrolases superfamily. DHOase family. Class I DHOase subfamily.</text>
</comment>
<proteinExistence type="inferred from homology"/>
<evidence type="ECO:0000255" key="1">
    <source>
        <dbReference type="HAMAP-Rule" id="MF_00220"/>
    </source>
</evidence>
<name>PYRC_GEOSW</name>
<sequence>MAIILKNGKSFNKDGVIERTELKIENGFITAIGSKLHSEEADEVIDVQGKLISAGFIDLHVHLREPGGEAKETIATGTLAAAKGGFTTVAAMPNTRPVPDTKEQMEWLCKRIRETAYVHVLPYAAITVGQQGTELTDFAALKEAGAFAFTDDGVGVQSAGMMYEAMKRAAALDMAIVAHCEDNTLANRGVVHDGEFAHRYGLYGIPSVCESVHIARDVLLAEATGCHYHVCHISTKESVRVVRDAKRAGIRVTAEVTPHHLLLCDEDIPGPDANYKMNPPLRSKEDREALIEGLLDGTIDFIATDHAPHTEAEKQKGINAAPFGIVGLETAFPLLYTHLVETNILTLKQLIDLLTVKPAECFGLPLGKLAVGERADITIIDLETEEAIDPQTFVSRGKNTPFAGWKCKGWPVMTFVGGKLVWQKGRE</sequence>
<protein>
    <recommendedName>
        <fullName evidence="1">Dihydroorotase</fullName>
        <shortName evidence="1">DHOase</shortName>
        <ecNumber evidence="1">3.5.2.3</ecNumber>
    </recommendedName>
</protein>
<feature type="chain" id="PRO_1000204253" description="Dihydroorotase">
    <location>
        <begin position="1"/>
        <end position="427"/>
    </location>
</feature>
<feature type="active site" evidence="1">
    <location>
        <position position="305"/>
    </location>
</feature>
<feature type="binding site" evidence="1">
    <location>
        <position position="60"/>
    </location>
    <ligand>
        <name>Zn(2+)</name>
        <dbReference type="ChEBI" id="CHEBI:29105"/>
        <label>1</label>
    </ligand>
</feature>
<feature type="binding site" evidence="1">
    <location>
        <begin position="62"/>
        <end position="64"/>
    </location>
    <ligand>
        <name>substrate</name>
    </ligand>
</feature>
<feature type="binding site" evidence="1">
    <location>
        <position position="62"/>
    </location>
    <ligand>
        <name>Zn(2+)</name>
        <dbReference type="ChEBI" id="CHEBI:29105"/>
        <label>1</label>
    </ligand>
</feature>
<feature type="binding site" evidence="1">
    <location>
        <position position="94"/>
    </location>
    <ligand>
        <name>substrate</name>
    </ligand>
</feature>
<feature type="binding site" evidence="1">
    <location>
        <position position="152"/>
    </location>
    <ligand>
        <name>Zn(2+)</name>
        <dbReference type="ChEBI" id="CHEBI:29105"/>
        <label>1</label>
    </ligand>
</feature>
<feature type="binding site" evidence="1">
    <location>
        <position position="152"/>
    </location>
    <ligand>
        <name>Zn(2+)</name>
        <dbReference type="ChEBI" id="CHEBI:29105"/>
        <label>2</label>
    </ligand>
</feature>
<feature type="binding site" evidence="1">
    <location>
        <position position="179"/>
    </location>
    <ligand>
        <name>Zn(2+)</name>
        <dbReference type="ChEBI" id="CHEBI:29105"/>
        <label>2</label>
    </ligand>
</feature>
<feature type="binding site" evidence="1">
    <location>
        <position position="232"/>
    </location>
    <ligand>
        <name>Zn(2+)</name>
        <dbReference type="ChEBI" id="CHEBI:29105"/>
        <label>2</label>
    </ligand>
</feature>
<feature type="binding site" evidence="1">
    <location>
        <position position="278"/>
    </location>
    <ligand>
        <name>substrate</name>
    </ligand>
</feature>
<feature type="binding site" evidence="1">
    <location>
        <position position="305"/>
    </location>
    <ligand>
        <name>Zn(2+)</name>
        <dbReference type="ChEBI" id="CHEBI:29105"/>
        <label>1</label>
    </ligand>
</feature>
<feature type="binding site" evidence="1">
    <location>
        <position position="309"/>
    </location>
    <ligand>
        <name>substrate</name>
    </ligand>
</feature>
<feature type="binding site" evidence="1">
    <location>
        <begin position="323"/>
        <end position="324"/>
    </location>
    <ligand>
        <name>substrate</name>
    </ligand>
</feature>
<organism>
    <name type="scientific">Geobacillus sp. (strain WCH70)</name>
    <dbReference type="NCBI Taxonomy" id="471223"/>
    <lineage>
        <taxon>Bacteria</taxon>
        <taxon>Bacillati</taxon>
        <taxon>Bacillota</taxon>
        <taxon>Bacilli</taxon>
        <taxon>Bacillales</taxon>
        <taxon>Anoxybacillaceae</taxon>
        <taxon>Geobacillus</taxon>
    </lineage>
</organism>
<accession>C5D8P8</accession>
<reference key="1">
    <citation type="submission" date="2009-06" db="EMBL/GenBank/DDBJ databases">
        <title>Complete sequence of chromosome of Geopacillus sp. WCH70.</title>
        <authorList>
            <consortium name="US DOE Joint Genome Institute"/>
            <person name="Lucas S."/>
            <person name="Copeland A."/>
            <person name="Lapidus A."/>
            <person name="Glavina del Rio T."/>
            <person name="Dalin E."/>
            <person name="Tice H."/>
            <person name="Bruce D."/>
            <person name="Goodwin L."/>
            <person name="Pitluck S."/>
            <person name="Chertkov O."/>
            <person name="Brettin T."/>
            <person name="Detter J.C."/>
            <person name="Han C."/>
            <person name="Larimer F."/>
            <person name="Land M."/>
            <person name="Hauser L."/>
            <person name="Kyrpides N."/>
            <person name="Mikhailova N."/>
            <person name="Brumm P."/>
            <person name="Mead D.A."/>
            <person name="Richardson P."/>
        </authorList>
    </citation>
    <scope>NUCLEOTIDE SEQUENCE [LARGE SCALE GENOMIC DNA]</scope>
    <source>
        <strain>WCH70</strain>
    </source>
</reference>
<keyword id="KW-0378">Hydrolase</keyword>
<keyword id="KW-0479">Metal-binding</keyword>
<keyword id="KW-0665">Pyrimidine biosynthesis</keyword>
<keyword id="KW-0862">Zinc</keyword>